<protein>
    <recommendedName>
        <fullName>Homocitrate synthase</fullName>
        <ecNumber>2.3.3.14</ecNumber>
    </recommendedName>
</protein>
<dbReference type="EC" id="2.3.3.14"/>
<dbReference type="EMBL" id="M86823">
    <property type="protein sequence ID" value="AAA26138.1"/>
    <property type="molecule type" value="Genomic_DNA"/>
</dbReference>
<dbReference type="PIR" id="D41880">
    <property type="entry name" value="D41880"/>
</dbReference>
<dbReference type="RefSeq" id="WP_017139924.1">
    <property type="nucleotide sequence ID" value="NZ_WSNV01000246.1"/>
</dbReference>
<dbReference type="SMR" id="Q01181"/>
<dbReference type="GeneID" id="3718442"/>
<dbReference type="GO" id="GO:0004410">
    <property type="term" value="F:homocitrate synthase activity"/>
    <property type="evidence" value="ECO:0007669"/>
    <property type="project" value="UniProtKB-EC"/>
</dbReference>
<dbReference type="GO" id="GO:0009058">
    <property type="term" value="P:biosynthetic process"/>
    <property type="evidence" value="ECO:0007669"/>
    <property type="project" value="UniProtKB-ARBA"/>
</dbReference>
<dbReference type="GO" id="GO:0019752">
    <property type="term" value="P:carboxylic acid metabolic process"/>
    <property type="evidence" value="ECO:0007669"/>
    <property type="project" value="InterPro"/>
</dbReference>
<dbReference type="GO" id="GO:0009399">
    <property type="term" value="P:nitrogen fixation"/>
    <property type="evidence" value="ECO:0007669"/>
    <property type="project" value="UniProtKB-KW"/>
</dbReference>
<dbReference type="CDD" id="cd07939">
    <property type="entry name" value="DRE_TIM_NifV"/>
    <property type="match status" value="1"/>
</dbReference>
<dbReference type="Gene3D" id="1.10.238.260">
    <property type="match status" value="1"/>
</dbReference>
<dbReference type="Gene3D" id="3.20.20.70">
    <property type="entry name" value="Aldolase class I"/>
    <property type="match status" value="1"/>
</dbReference>
<dbReference type="InterPro" id="IPR002034">
    <property type="entry name" value="AIPM/Hcit_synth_CS"/>
</dbReference>
<dbReference type="InterPro" id="IPR013785">
    <property type="entry name" value="Aldolase_TIM"/>
</dbReference>
<dbReference type="InterPro" id="IPR054691">
    <property type="entry name" value="LeuA/HCS_post-cat"/>
</dbReference>
<dbReference type="InterPro" id="IPR013477">
    <property type="entry name" value="NifV/FrbC"/>
</dbReference>
<dbReference type="InterPro" id="IPR000891">
    <property type="entry name" value="PYR_CT"/>
</dbReference>
<dbReference type="NCBIfam" id="TIGR02660">
    <property type="entry name" value="nifV_homocitr"/>
    <property type="match status" value="1"/>
</dbReference>
<dbReference type="PANTHER" id="PTHR42880">
    <property type="entry name" value="HOMOCITRATE SYNTHASE"/>
    <property type="match status" value="1"/>
</dbReference>
<dbReference type="PANTHER" id="PTHR42880:SF1">
    <property type="entry name" value="ISOPROPYLMALATE_HOMOCITRATE_CITRAMALATE SYNTHASE FAMILY PROTEIN"/>
    <property type="match status" value="1"/>
</dbReference>
<dbReference type="Pfam" id="PF22617">
    <property type="entry name" value="HCS_D2"/>
    <property type="match status" value="1"/>
</dbReference>
<dbReference type="Pfam" id="PF00682">
    <property type="entry name" value="HMGL-like"/>
    <property type="match status" value="1"/>
</dbReference>
<dbReference type="SUPFAM" id="SSF51569">
    <property type="entry name" value="Aldolase"/>
    <property type="match status" value="1"/>
</dbReference>
<dbReference type="PROSITE" id="PS00815">
    <property type="entry name" value="AIPM_HOMOCIT_SYNTH_1"/>
    <property type="match status" value="1"/>
</dbReference>
<dbReference type="PROSITE" id="PS00816">
    <property type="entry name" value="AIPM_HOMOCIT_SYNTH_2"/>
    <property type="match status" value="1"/>
</dbReference>
<dbReference type="PROSITE" id="PS50991">
    <property type="entry name" value="PYR_CT"/>
    <property type="match status" value="1"/>
</dbReference>
<feature type="chain" id="PRO_0000140466" description="Homocitrate synthase">
    <location>
        <begin position="1"/>
        <end position="391"/>
    </location>
</feature>
<feature type="domain" description="Pyruvate carboxyltransferase" evidence="1">
    <location>
        <begin position="19"/>
        <end position="269"/>
    </location>
</feature>
<accession>Q01181</accession>
<reference key="1">
    <citation type="journal article" date="1992" name="J. Bacteriol.">
        <title>Isolation and characterization of the nifUSVW-rpoN gene cluster from Rhodobacter sphaeroides.</title>
        <authorList>
            <person name="Meijer W.G."/>
            <person name="Tabita F.R."/>
        </authorList>
    </citation>
    <scope>NUCLEOTIDE SEQUENCE [GENOMIC DNA]</scope>
</reference>
<sequence length="391" mass="40666">MSRQQPRASFLPESPLAPVALCDTTLRDGEQTAGVAFTRAEKRAIAEALQAAGVAEVEVGVPAMGEEERADIRAVAAVLKTAAPVVWCRLRAEDLAAAQRTGVVRLHIGVPVSERQISAKLGKDAAWVRDKVEKLVRAASWAGHKVSVGAEDASRADPFFLAEIAHVAAEAGAIRFRISDTLGVLDPFAAHELVGRVVTRCPLPVEFHGHNDLGMATANSLAAARAGASHLSVTVNGLGERAGNAALEEVAAALEAAGRATGVALGQLCALSELVARASGRPLSPQKPIVGEGVFTHECGIHVDGLMKDRATYESADLRPERFGRSHRIAIGKHSSAAGLARALAEAGLPADAATLAALMPALRDWAAITKRAAAPEDLAALLAAQTETAR</sequence>
<keyword id="KW-0535">Nitrogen fixation</keyword>
<keyword id="KW-0808">Transferase</keyword>
<evidence type="ECO:0000255" key="1">
    <source>
        <dbReference type="PROSITE-ProRule" id="PRU01151"/>
    </source>
</evidence>
<evidence type="ECO:0000305" key="2"/>
<organism>
    <name type="scientific">Cereibacter sphaeroides</name>
    <name type="common">Rhodobacter sphaeroides</name>
    <dbReference type="NCBI Taxonomy" id="1063"/>
    <lineage>
        <taxon>Bacteria</taxon>
        <taxon>Pseudomonadati</taxon>
        <taxon>Pseudomonadota</taxon>
        <taxon>Alphaproteobacteria</taxon>
        <taxon>Rhodobacterales</taxon>
        <taxon>Paracoccaceae</taxon>
        <taxon>Cereibacter</taxon>
    </lineage>
</organism>
<proteinExistence type="inferred from homology"/>
<comment type="function">
    <text>This protein is a Fe-Mo-cofactor biosynthetic component.</text>
</comment>
<comment type="catalytic activity">
    <reaction>
        <text>acetyl-CoA + 2-oxoglutarate + H2O = (2R)-homocitrate + CoA + H(+)</text>
        <dbReference type="Rhea" id="RHEA:12929"/>
        <dbReference type="ChEBI" id="CHEBI:15377"/>
        <dbReference type="ChEBI" id="CHEBI:15378"/>
        <dbReference type="ChEBI" id="CHEBI:16810"/>
        <dbReference type="ChEBI" id="CHEBI:57287"/>
        <dbReference type="ChEBI" id="CHEBI:57288"/>
        <dbReference type="ChEBI" id="CHEBI:58884"/>
        <dbReference type="EC" id="2.3.3.14"/>
    </reaction>
</comment>
<comment type="similarity">
    <text evidence="2">Belongs to the alpha-IPM synthase/homocitrate synthase family.</text>
</comment>
<name>NIFV_CERSP</name>
<gene>
    <name type="primary">nifV</name>
</gene>